<name>DNAJ1_AQUAE</name>
<gene>
    <name evidence="1" type="primary">dnaJ1</name>
    <name type="ordered locus">aq_1735</name>
</gene>
<dbReference type="EMBL" id="AE000657">
    <property type="protein sequence ID" value="AAC07578.1"/>
    <property type="molecule type" value="Genomic_DNA"/>
</dbReference>
<dbReference type="PIR" id="E70449">
    <property type="entry name" value="E70449"/>
</dbReference>
<dbReference type="RefSeq" id="NP_214189.1">
    <property type="nucleotide sequence ID" value="NC_000918.1"/>
</dbReference>
<dbReference type="RefSeq" id="WP_010881126.1">
    <property type="nucleotide sequence ID" value="NC_000918.1"/>
</dbReference>
<dbReference type="SMR" id="O67623"/>
<dbReference type="STRING" id="224324.aq_1735"/>
<dbReference type="EnsemblBacteria" id="AAC07578">
    <property type="protein sequence ID" value="AAC07578"/>
    <property type="gene ID" value="aq_1735"/>
</dbReference>
<dbReference type="KEGG" id="aae:aq_1735"/>
<dbReference type="PATRIC" id="fig|224324.8.peg.1336"/>
<dbReference type="eggNOG" id="COG0484">
    <property type="taxonomic scope" value="Bacteria"/>
</dbReference>
<dbReference type="HOGENOM" id="CLU_017633_0_7_0"/>
<dbReference type="InParanoid" id="O67623"/>
<dbReference type="OrthoDB" id="9779889at2"/>
<dbReference type="Proteomes" id="UP000000798">
    <property type="component" value="Chromosome"/>
</dbReference>
<dbReference type="GO" id="GO:0005737">
    <property type="term" value="C:cytoplasm"/>
    <property type="evidence" value="ECO:0000318"/>
    <property type="project" value="GO_Central"/>
</dbReference>
<dbReference type="GO" id="GO:0005524">
    <property type="term" value="F:ATP binding"/>
    <property type="evidence" value="ECO:0007669"/>
    <property type="project" value="InterPro"/>
</dbReference>
<dbReference type="GO" id="GO:0031072">
    <property type="term" value="F:heat shock protein binding"/>
    <property type="evidence" value="ECO:0007669"/>
    <property type="project" value="InterPro"/>
</dbReference>
<dbReference type="GO" id="GO:0051082">
    <property type="term" value="F:unfolded protein binding"/>
    <property type="evidence" value="ECO:0000318"/>
    <property type="project" value="GO_Central"/>
</dbReference>
<dbReference type="GO" id="GO:0008270">
    <property type="term" value="F:zinc ion binding"/>
    <property type="evidence" value="ECO:0007669"/>
    <property type="project" value="UniProtKB-UniRule"/>
</dbReference>
<dbReference type="GO" id="GO:0051085">
    <property type="term" value="P:chaperone cofactor-dependent protein refolding"/>
    <property type="evidence" value="ECO:0000318"/>
    <property type="project" value="GO_Central"/>
</dbReference>
<dbReference type="GO" id="GO:0006260">
    <property type="term" value="P:DNA replication"/>
    <property type="evidence" value="ECO:0007669"/>
    <property type="project" value="UniProtKB-KW"/>
</dbReference>
<dbReference type="GO" id="GO:0042026">
    <property type="term" value="P:protein refolding"/>
    <property type="evidence" value="ECO:0000318"/>
    <property type="project" value="GO_Central"/>
</dbReference>
<dbReference type="GO" id="GO:0009408">
    <property type="term" value="P:response to heat"/>
    <property type="evidence" value="ECO:0007669"/>
    <property type="project" value="InterPro"/>
</dbReference>
<dbReference type="CDD" id="cd06257">
    <property type="entry name" value="DnaJ"/>
    <property type="match status" value="1"/>
</dbReference>
<dbReference type="CDD" id="cd10747">
    <property type="entry name" value="DnaJ_C"/>
    <property type="match status" value="1"/>
</dbReference>
<dbReference type="CDD" id="cd10719">
    <property type="entry name" value="DnaJ_zf"/>
    <property type="match status" value="1"/>
</dbReference>
<dbReference type="FunFam" id="2.60.260.20:FF:000005">
    <property type="entry name" value="Chaperone protein dnaJ 1, mitochondrial"/>
    <property type="match status" value="1"/>
</dbReference>
<dbReference type="FunFam" id="2.10.230.10:FF:000002">
    <property type="entry name" value="Molecular chaperone DnaJ"/>
    <property type="match status" value="1"/>
</dbReference>
<dbReference type="Gene3D" id="1.10.287.110">
    <property type="entry name" value="DnaJ domain"/>
    <property type="match status" value="1"/>
</dbReference>
<dbReference type="Gene3D" id="2.10.230.10">
    <property type="entry name" value="Heat shock protein DnaJ, cysteine-rich domain"/>
    <property type="match status" value="1"/>
</dbReference>
<dbReference type="Gene3D" id="2.60.260.20">
    <property type="entry name" value="Urease metallochaperone UreE, N-terminal domain"/>
    <property type="match status" value="2"/>
</dbReference>
<dbReference type="HAMAP" id="MF_01152">
    <property type="entry name" value="DnaJ"/>
    <property type="match status" value="1"/>
</dbReference>
<dbReference type="InterPro" id="IPR012724">
    <property type="entry name" value="DnaJ"/>
</dbReference>
<dbReference type="InterPro" id="IPR002939">
    <property type="entry name" value="DnaJ_C"/>
</dbReference>
<dbReference type="InterPro" id="IPR001623">
    <property type="entry name" value="DnaJ_domain"/>
</dbReference>
<dbReference type="InterPro" id="IPR008971">
    <property type="entry name" value="HSP40/DnaJ_pept-bd"/>
</dbReference>
<dbReference type="InterPro" id="IPR001305">
    <property type="entry name" value="HSP_DnaJ_Cys-rich_dom"/>
</dbReference>
<dbReference type="InterPro" id="IPR036410">
    <property type="entry name" value="HSP_DnaJ_Cys-rich_dom_sf"/>
</dbReference>
<dbReference type="InterPro" id="IPR036869">
    <property type="entry name" value="J_dom_sf"/>
</dbReference>
<dbReference type="PANTHER" id="PTHR43096">
    <property type="entry name" value="DNAJ HOMOLOG 1, MITOCHONDRIAL-RELATED"/>
    <property type="match status" value="1"/>
</dbReference>
<dbReference type="PANTHER" id="PTHR43096:SF52">
    <property type="entry name" value="DNAJ HOMOLOG 1, MITOCHONDRIAL-RELATED"/>
    <property type="match status" value="1"/>
</dbReference>
<dbReference type="Pfam" id="PF00226">
    <property type="entry name" value="DnaJ"/>
    <property type="match status" value="1"/>
</dbReference>
<dbReference type="Pfam" id="PF01556">
    <property type="entry name" value="DnaJ_C"/>
    <property type="match status" value="1"/>
</dbReference>
<dbReference type="Pfam" id="PF00684">
    <property type="entry name" value="DnaJ_CXXCXGXG"/>
    <property type="match status" value="1"/>
</dbReference>
<dbReference type="PRINTS" id="PR00625">
    <property type="entry name" value="JDOMAIN"/>
</dbReference>
<dbReference type="SMART" id="SM00271">
    <property type="entry name" value="DnaJ"/>
    <property type="match status" value="1"/>
</dbReference>
<dbReference type="SUPFAM" id="SSF46565">
    <property type="entry name" value="Chaperone J-domain"/>
    <property type="match status" value="1"/>
</dbReference>
<dbReference type="SUPFAM" id="SSF57938">
    <property type="entry name" value="DnaJ/Hsp40 cysteine-rich domain"/>
    <property type="match status" value="1"/>
</dbReference>
<dbReference type="SUPFAM" id="SSF49493">
    <property type="entry name" value="HSP40/DnaJ peptide-binding domain"/>
    <property type="match status" value="2"/>
</dbReference>
<dbReference type="PROSITE" id="PS50076">
    <property type="entry name" value="DNAJ_2"/>
    <property type="match status" value="1"/>
</dbReference>
<dbReference type="PROSITE" id="PS51188">
    <property type="entry name" value="ZF_CR"/>
    <property type="match status" value="1"/>
</dbReference>
<proteinExistence type="inferred from homology"/>
<comment type="function">
    <text evidence="1">Participates actively in the response to hyperosmotic and heat shock by preventing the aggregation of stress-denatured proteins and by disaggregating proteins, also in an autonomous, DnaK-independent fashion. Unfolded proteins bind initially to DnaJ; upon interaction with the DnaJ-bound protein, DnaK hydrolyzes its bound ATP, resulting in the formation of a stable complex. GrpE releases ADP from DnaK; ATP binding to DnaK triggers the release of the substrate protein, thus completing the reaction cycle. Several rounds of ATP-dependent interactions between DnaJ, DnaK and GrpE are required for fully efficient folding. Also involved, together with DnaK and GrpE, in the DNA replication of plasmids through activation of initiation proteins.</text>
</comment>
<comment type="cofactor">
    <cofactor evidence="1">
        <name>Zn(2+)</name>
        <dbReference type="ChEBI" id="CHEBI:29105"/>
    </cofactor>
    <text evidence="1">Binds 2 Zn(2+) ions per monomer.</text>
</comment>
<comment type="subunit">
    <text evidence="1">Homodimer.</text>
</comment>
<comment type="subcellular location">
    <subcellularLocation>
        <location evidence="1">Cytoplasm</location>
    </subcellularLocation>
</comment>
<comment type="domain">
    <text evidence="1">The J domain is necessary and sufficient to stimulate DnaK ATPase activity. Zinc center 1 plays an important role in the autonomous, DnaK-independent chaperone activity of DnaJ. Zinc center 2 is essential for interaction with DnaK and for DnaJ activity.</text>
</comment>
<comment type="similarity">
    <text evidence="1">Belongs to the DnaJ family.</text>
</comment>
<protein>
    <recommendedName>
        <fullName evidence="1">Chaperone protein DnaJ 1</fullName>
    </recommendedName>
</protein>
<accession>O67623</accession>
<evidence type="ECO:0000255" key="1">
    <source>
        <dbReference type="HAMAP-Rule" id="MF_01152"/>
    </source>
</evidence>
<organism>
    <name type="scientific">Aquifex aeolicus (strain VF5)</name>
    <dbReference type="NCBI Taxonomy" id="224324"/>
    <lineage>
        <taxon>Bacteria</taxon>
        <taxon>Pseudomonadati</taxon>
        <taxon>Aquificota</taxon>
        <taxon>Aquificia</taxon>
        <taxon>Aquificales</taxon>
        <taxon>Aquificaceae</taxon>
        <taxon>Aquifex</taxon>
    </lineage>
</organism>
<sequence length="364" mass="40937">MSQAVKDYYEILGVNRDATKEEIKKAYRKLVRIYHPDINPDPSAQEKFKEINEAYHVLIDDERRSEYDAILSRNDVGKFRDFLEYIQEFVESIIQGEKGKKRRPRKGQDIKMKLPLTLEEAGLGCEKEIIYSRWMDCPVCEGMGVKGEAETVVCHACNGEGRRVSGIFNFPRPCSVCKGKGFIVKNPCPTCYGRGRVSAQHKIKVHIPPGTEEGEVLKVPEKGHLGYFGGKPGDLYLKVVLKEHPIFKKVGKDLHMEKVVSFPLAVLGGTVKVPTLEGEEIDVFIQPGTECGATKVVKEKGYPYENGRGDLIIHIRIGVPKNLSKSERKLLEKLAESIKEEGEEVYREGGSLVEKLSSLFKKNA</sequence>
<keyword id="KW-0143">Chaperone</keyword>
<keyword id="KW-0963">Cytoplasm</keyword>
<keyword id="KW-0235">DNA replication</keyword>
<keyword id="KW-0479">Metal-binding</keyword>
<keyword id="KW-1185">Reference proteome</keyword>
<keyword id="KW-0677">Repeat</keyword>
<keyword id="KW-0346">Stress response</keyword>
<keyword id="KW-0862">Zinc</keyword>
<keyword id="KW-0863">Zinc-finger</keyword>
<reference key="1">
    <citation type="journal article" date="1998" name="Nature">
        <title>The complete genome of the hyperthermophilic bacterium Aquifex aeolicus.</title>
        <authorList>
            <person name="Deckert G."/>
            <person name="Warren P.V."/>
            <person name="Gaasterland T."/>
            <person name="Young W.G."/>
            <person name="Lenox A.L."/>
            <person name="Graham D.E."/>
            <person name="Overbeek R."/>
            <person name="Snead M.A."/>
            <person name="Keller M."/>
            <person name="Aujay M."/>
            <person name="Huber R."/>
            <person name="Feldman R.A."/>
            <person name="Short J.M."/>
            <person name="Olsen G.J."/>
            <person name="Swanson R.V."/>
        </authorList>
    </citation>
    <scope>NUCLEOTIDE SEQUENCE [LARGE SCALE GENOMIC DNA]</scope>
    <source>
        <strain>VF5</strain>
    </source>
</reference>
<feature type="chain" id="PRO_0000070711" description="Chaperone protein DnaJ 1">
    <location>
        <begin position="1"/>
        <end position="364"/>
    </location>
</feature>
<feature type="domain" description="J" evidence="1">
    <location>
        <begin position="7"/>
        <end position="71"/>
    </location>
</feature>
<feature type="repeat" description="CXXCXGXG motif">
    <location>
        <begin position="137"/>
        <end position="144"/>
    </location>
</feature>
<feature type="repeat" description="CXXCXGXG motif">
    <location>
        <begin position="154"/>
        <end position="161"/>
    </location>
</feature>
<feature type="repeat" description="CXXCXGXG motif">
    <location>
        <begin position="174"/>
        <end position="181"/>
    </location>
</feature>
<feature type="repeat" description="CXXCXGXG motif">
    <location>
        <begin position="188"/>
        <end position="195"/>
    </location>
</feature>
<feature type="zinc finger region" description="CR-type" evidence="1">
    <location>
        <begin position="124"/>
        <end position="200"/>
    </location>
</feature>
<feature type="binding site" evidence="1">
    <location>
        <position position="137"/>
    </location>
    <ligand>
        <name>Zn(2+)</name>
        <dbReference type="ChEBI" id="CHEBI:29105"/>
        <label>1</label>
    </ligand>
</feature>
<feature type="binding site" evidence="1">
    <location>
        <position position="140"/>
    </location>
    <ligand>
        <name>Zn(2+)</name>
        <dbReference type="ChEBI" id="CHEBI:29105"/>
        <label>1</label>
    </ligand>
</feature>
<feature type="binding site" evidence="1">
    <location>
        <position position="154"/>
    </location>
    <ligand>
        <name>Zn(2+)</name>
        <dbReference type="ChEBI" id="CHEBI:29105"/>
        <label>2</label>
    </ligand>
</feature>
<feature type="binding site" evidence="1">
    <location>
        <position position="157"/>
    </location>
    <ligand>
        <name>Zn(2+)</name>
        <dbReference type="ChEBI" id="CHEBI:29105"/>
        <label>2</label>
    </ligand>
</feature>
<feature type="binding site" evidence="1">
    <location>
        <position position="174"/>
    </location>
    <ligand>
        <name>Zn(2+)</name>
        <dbReference type="ChEBI" id="CHEBI:29105"/>
        <label>2</label>
    </ligand>
</feature>
<feature type="binding site" evidence="1">
    <location>
        <position position="177"/>
    </location>
    <ligand>
        <name>Zn(2+)</name>
        <dbReference type="ChEBI" id="CHEBI:29105"/>
        <label>2</label>
    </ligand>
</feature>
<feature type="binding site" evidence="1">
    <location>
        <position position="188"/>
    </location>
    <ligand>
        <name>Zn(2+)</name>
        <dbReference type="ChEBI" id="CHEBI:29105"/>
        <label>1</label>
    </ligand>
</feature>
<feature type="binding site" evidence="1">
    <location>
        <position position="191"/>
    </location>
    <ligand>
        <name>Zn(2+)</name>
        <dbReference type="ChEBI" id="CHEBI:29105"/>
        <label>1</label>
    </ligand>
</feature>